<evidence type="ECO:0000255" key="1">
    <source>
        <dbReference type="HAMAP-Rule" id="MF_00384"/>
    </source>
</evidence>
<keyword id="KW-0028">Amino-acid biosynthesis</keyword>
<keyword id="KW-0067">ATP-binding</keyword>
<keyword id="KW-0963">Cytoplasm</keyword>
<keyword id="KW-0418">Kinase</keyword>
<keyword id="KW-0547">Nucleotide-binding</keyword>
<keyword id="KW-1185">Reference proteome</keyword>
<keyword id="KW-0791">Threonine biosynthesis</keyword>
<keyword id="KW-0808">Transferase</keyword>
<sequence>MKVSVPATSANLGPGFDCLGLAVSLKNQVIIRPSKFHSVSLKGEGANNPALKDNNMFISIFNDFYQNLSHKKRFFRFEFQNEIPLSRGLGSSSAVIVSAIASAYAIEGIKLERDKLLNLALAYESHPDNITPAVMGGFNVACVQENEVKYINKPIPKSLKAVIVVPNRAISTAMSRKTLPFKYSKEDTIFNISHSSLLTAAFMSENWEMLKYASNDQVHQKYRMKQMPELFEVQKTALKEGALMSTLSGSGSTLFSMAYTDDSRNLEKALKNKFPHFRVFVVDFDNTGVKIEL</sequence>
<reference key="1">
    <citation type="journal article" date="2007" name="PLoS ONE">
        <title>The complete genome sequence and analysis of the Epsilonproteobacterium Arcobacter butzleri.</title>
        <authorList>
            <person name="Miller W.G."/>
            <person name="Parker C.T."/>
            <person name="Rubenfield M."/>
            <person name="Mendz G.L."/>
            <person name="Woesten M.M.S.M."/>
            <person name="Ussery D.W."/>
            <person name="Stolz J.F."/>
            <person name="Binnewies T.T."/>
            <person name="Hallin P.F."/>
            <person name="Wang G."/>
            <person name="Malek J.A."/>
            <person name="Rogosin A."/>
            <person name="Stanker L.H."/>
            <person name="Mandrell R.E."/>
        </authorList>
    </citation>
    <scope>NUCLEOTIDE SEQUENCE [LARGE SCALE GENOMIC DNA]</scope>
    <source>
        <strain>RM4018</strain>
    </source>
</reference>
<dbReference type="EC" id="2.7.1.39" evidence="1"/>
<dbReference type="EMBL" id="CP000361">
    <property type="protein sequence ID" value="ABV68258.1"/>
    <property type="molecule type" value="Genomic_DNA"/>
</dbReference>
<dbReference type="RefSeq" id="WP_012147924.1">
    <property type="nucleotide sequence ID" value="NC_009850.1"/>
</dbReference>
<dbReference type="SMR" id="A8EWD5"/>
<dbReference type="STRING" id="367737.Abu_2041"/>
<dbReference type="GeneID" id="24304479"/>
<dbReference type="KEGG" id="abu:Abu_2041"/>
<dbReference type="eggNOG" id="COG0083">
    <property type="taxonomic scope" value="Bacteria"/>
</dbReference>
<dbReference type="HOGENOM" id="CLU_041243_0_0_7"/>
<dbReference type="UniPathway" id="UPA00050">
    <property type="reaction ID" value="UER00064"/>
</dbReference>
<dbReference type="Proteomes" id="UP000001136">
    <property type="component" value="Chromosome"/>
</dbReference>
<dbReference type="GO" id="GO:0005737">
    <property type="term" value="C:cytoplasm"/>
    <property type="evidence" value="ECO:0007669"/>
    <property type="project" value="UniProtKB-SubCell"/>
</dbReference>
<dbReference type="GO" id="GO:0005524">
    <property type="term" value="F:ATP binding"/>
    <property type="evidence" value="ECO:0007669"/>
    <property type="project" value="UniProtKB-UniRule"/>
</dbReference>
<dbReference type="GO" id="GO:0004413">
    <property type="term" value="F:homoserine kinase activity"/>
    <property type="evidence" value="ECO:0007669"/>
    <property type="project" value="UniProtKB-UniRule"/>
</dbReference>
<dbReference type="GO" id="GO:0009088">
    <property type="term" value="P:threonine biosynthetic process"/>
    <property type="evidence" value="ECO:0007669"/>
    <property type="project" value="UniProtKB-UniRule"/>
</dbReference>
<dbReference type="Gene3D" id="3.30.230.10">
    <property type="match status" value="1"/>
</dbReference>
<dbReference type="Gene3D" id="3.30.70.890">
    <property type="entry name" value="GHMP kinase, C-terminal domain"/>
    <property type="match status" value="1"/>
</dbReference>
<dbReference type="HAMAP" id="MF_00384">
    <property type="entry name" value="Homoser_kinase"/>
    <property type="match status" value="1"/>
</dbReference>
<dbReference type="InterPro" id="IPR013750">
    <property type="entry name" value="GHMP_kinase_C_dom"/>
</dbReference>
<dbReference type="InterPro" id="IPR036554">
    <property type="entry name" value="GHMP_kinase_C_sf"/>
</dbReference>
<dbReference type="InterPro" id="IPR006204">
    <property type="entry name" value="GHMP_kinase_N_dom"/>
</dbReference>
<dbReference type="InterPro" id="IPR006203">
    <property type="entry name" value="GHMP_knse_ATP-bd_CS"/>
</dbReference>
<dbReference type="InterPro" id="IPR000870">
    <property type="entry name" value="Homoserine_kinase"/>
</dbReference>
<dbReference type="InterPro" id="IPR020568">
    <property type="entry name" value="Ribosomal_Su5_D2-typ_SF"/>
</dbReference>
<dbReference type="InterPro" id="IPR014721">
    <property type="entry name" value="Ribsml_uS5_D2-typ_fold_subgr"/>
</dbReference>
<dbReference type="NCBIfam" id="TIGR00191">
    <property type="entry name" value="thrB"/>
    <property type="match status" value="1"/>
</dbReference>
<dbReference type="PANTHER" id="PTHR20861:SF1">
    <property type="entry name" value="HOMOSERINE KINASE"/>
    <property type="match status" value="1"/>
</dbReference>
<dbReference type="PANTHER" id="PTHR20861">
    <property type="entry name" value="HOMOSERINE/4-DIPHOSPHOCYTIDYL-2-C-METHYL-D-ERYTHRITOL KINASE"/>
    <property type="match status" value="1"/>
</dbReference>
<dbReference type="Pfam" id="PF08544">
    <property type="entry name" value="GHMP_kinases_C"/>
    <property type="match status" value="1"/>
</dbReference>
<dbReference type="Pfam" id="PF00288">
    <property type="entry name" value="GHMP_kinases_N"/>
    <property type="match status" value="1"/>
</dbReference>
<dbReference type="PIRSF" id="PIRSF000676">
    <property type="entry name" value="Homoser_kin"/>
    <property type="match status" value="1"/>
</dbReference>
<dbReference type="PRINTS" id="PR00958">
    <property type="entry name" value="HOMSERKINASE"/>
</dbReference>
<dbReference type="SUPFAM" id="SSF55060">
    <property type="entry name" value="GHMP Kinase, C-terminal domain"/>
    <property type="match status" value="1"/>
</dbReference>
<dbReference type="SUPFAM" id="SSF54211">
    <property type="entry name" value="Ribosomal protein S5 domain 2-like"/>
    <property type="match status" value="1"/>
</dbReference>
<dbReference type="PROSITE" id="PS00627">
    <property type="entry name" value="GHMP_KINASES_ATP"/>
    <property type="match status" value="1"/>
</dbReference>
<organism>
    <name type="scientific">Aliarcobacter butzleri (strain RM4018)</name>
    <name type="common">Arcobacter butzleri</name>
    <dbReference type="NCBI Taxonomy" id="367737"/>
    <lineage>
        <taxon>Bacteria</taxon>
        <taxon>Pseudomonadati</taxon>
        <taxon>Campylobacterota</taxon>
        <taxon>Epsilonproteobacteria</taxon>
        <taxon>Campylobacterales</taxon>
        <taxon>Arcobacteraceae</taxon>
        <taxon>Aliarcobacter</taxon>
    </lineage>
</organism>
<proteinExistence type="inferred from homology"/>
<feature type="chain" id="PRO_1000060697" description="Homoserine kinase">
    <location>
        <begin position="1"/>
        <end position="293"/>
    </location>
</feature>
<feature type="binding site" evidence="1">
    <location>
        <begin position="84"/>
        <end position="94"/>
    </location>
    <ligand>
        <name>ATP</name>
        <dbReference type="ChEBI" id="CHEBI:30616"/>
    </ligand>
</feature>
<gene>
    <name evidence="1" type="primary">thrB</name>
    <name type="ordered locus">Abu_2041</name>
</gene>
<accession>A8EWD5</accession>
<protein>
    <recommendedName>
        <fullName evidence="1">Homoserine kinase</fullName>
        <shortName evidence="1">HK</shortName>
        <shortName evidence="1">HSK</shortName>
        <ecNumber evidence="1">2.7.1.39</ecNumber>
    </recommendedName>
</protein>
<comment type="function">
    <text evidence="1">Catalyzes the ATP-dependent phosphorylation of L-homoserine to L-homoserine phosphate.</text>
</comment>
<comment type="catalytic activity">
    <reaction evidence="1">
        <text>L-homoserine + ATP = O-phospho-L-homoserine + ADP + H(+)</text>
        <dbReference type="Rhea" id="RHEA:13985"/>
        <dbReference type="ChEBI" id="CHEBI:15378"/>
        <dbReference type="ChEBI" id="CHEBI:30616"/>
        <dbReference type="ChEBI" id="CHEBI:57476"/>
        <dbReference type="ChEBI" id="CHEBI:57590"/>
        <dbReference type="ChEBI" id="CHEBI:456216"/>
        <dbReference type="EC" id="2.7.1.39"/>
    </reaction>
</comment>
<comment type="pathway">
    <text evidence="1">Amino-acid biosynthesis; L-threonine biosynthesis; L-threonine from L-aspartate: step 4/5.</text>
</comment>
<comment type="subcellular location">
    <subcellularLocation>
        <location evidence="1">Cytoplasm</location>
    </subcellularLocation>
</comment>
<comment type="similarity">
    <text evidence="1">Belongs to the GHMP kinase family. Homoserine kinase subfamily.</text>
</comment>
<name>KHSE_ALIB4</name>